<feature type="chain" id="PRO_0000384607" description="Ribosome maturation factor RimP">
    <location>
        <begin position="1"/>
        <end position="144"/>
    </location>
</feature>
<keyword id="KW-0963">Cytoplasm</keyword>
<keyword id="KW-1185">Reference proteome</keyword>
<keyword id="KW-0690">Ribosome biogenesis</keyword>
<comment type="function">
    <text evidence="1">Required for maturation of 30S ribosomal subunits.</text>
</comment>
<comment type="subcellular location">
    <subcellularLocation>
        <location evidence="1">Cytoplasm</location>
    </subcellularLocation>
</comment>
<comment type="similarity">
    <text evidence="1">Belongs to the RimP family.</text>
</comment>
<gene>
    <name evidence="1" type="primary">rimP</name>
    <name type="ordered locus">azo2109</name>
</gene>
<proteinExistence type="inferred from homology"/>
<protein>
    <recommendedName>
        <fullName evidence="1">Ribosome maturation factor RimP</fullName>
    </recommendedName>
</protein>
<name>RIMP_AZOSB</name>
<accession>A1K7C1</accession>
<dbReference type="EMBL" id="AM406670">
    <property type="protein sequence ID" value="CAL94726.1"/>
    <property type="molecule type" value="Genomic_DNA"/>
</dbReference>
<dbReference type="RefSeq" id="WP_011765840.1">
    <property type="nucleotide sequence ID" value="NC_008702.1"/>
</dbReference>
<dbReference type="SMR" id="A1K7C1"/>
<dbReference type="STRING" id="62928.azo2109"/>
<dbReference type="KEGG" id="aoa:dqs_2241"/>
<dbReference type="KEGG" id="azo:azo2109"/>
<dbReference type="eggNOG" id="COG0779">
    <property type="taxonomic scope" value="Bacteria"/>
</dbReference>
<dbReference type="HOGENOM" id="CLU_070525_1_0_4"/>
<dbReference type="OrthoDB" id="9805006at2"/>
<dbReference type="Proteomes" id="UP000002588">
    <property type="component" value="Chromosome"/>
</dbReference>
<dbReference type="GO" id="GO:0005829">
    <property type="term" value="C:cytosol"/>
    <property type="evidence" value="ECO:0007669"/>
    <property type="project" value="TreeGrafter"/>
</dbReference>
<dbReference type="GO" id="GO:0000028">
    <property type="term" value="P:ribosomal small subunit assembly"/>
    <property type="evidence" value="ECO:0007669"/>
    <property type="project" value="TreeGrafter"/>
</dbReference>
<dbReference type="GO" id="GO:0006412">
    <property type="term" value="P:translation"/>
    <property type="evidence" value="ECO:0007669"/>
    <property type="project" value="TreeGrafter"/>
</dbReference>
<dbReference type="CDD" id="cd01734">
    <property type="entry name" value="YlxS_C"/>
    <property type="match status" value="1"/>
</dbReference>
<dbReference type="Gene3D" id="2.30.30.180">
    <property type="entry name" value="Ribosome maturation factor RimP, C-terminal domain"/>
    <property type="match status" value="1"/>
</dbReference>
<dbReference type="Gene3D" id="3.30.300.70">
    <property type="entry name" value="RimP-like superfamily, N-terminal"/>
    <property type="match status" value="1"/>
</dbReference>
<dbReference type="HAMAP" id="MF_01077">
    <property type="entry name" value="RimP"/>
    <property type="match status" value="1"/>
</dbReference>
<dbReference type="InterPro" id="IPR003728">
    <property type="entry name" value="Ribosome_maturation_RimP"/>
</dbReference>
<dbReference type="InterPro" id="IPR028998">
    <property type="entry name" value="RimP_C"/>
</dbReference>
<dbReference type="InterPro" id="IPR036847">
    <property type="entry name" value="RimP_C_sf"/>
</dbReference>
<dbReference type="InterPro" id="IPR028989">
    <property type="entry name" value="RimP_N"/>
</dbReference>
<dbReference type="InterPro" id="IPR035956">
    <property type="entry name" value="RimP_N_sf"/>
</dbReference>
<dbReference type="NCBIfam" id="NF000929">
    <property type="entry name" value="PRK00092.2-1"/>
    <property type="match status" value="1"/>
</dbReference>
<dbReference type="PANTHER" id="PTHR33867">
    <property type="entry name" value="RIBOSOME MATURATION FACTOR RIMP"/>
    <property type="match status" value="1"/>
</dbReference>
<dbReference type="PANTHER" id="PTHR33867:SF1">
    <property type="entry name" value="RIBOSOME MATURATION FACTOR RIMP"/>
    <property type="match status" value="1"/>
</dbReference>
<dbReference type="Pfam" id="PF17384">
    <property type="entry name" value="DUF150_C"/>
    <property type="match status" value="1"/>
</dbReference>
<dbReference type="Pfam" id="PF02576">
    <property type="entry name" value="RimP_N"/>
    <property type="match status" value="1"/>
</dbReference>
<dbReference type="SUPFAM" id="SSF74942">
    <property type="entry name" value="YhbC-like, C-terminal domain"/>
    <property type="match status" value="1"/>
</dbReference>
<dbReference type="SUPFAM" id="SSF75420">
    <property type="entry name" value="YhbC-like, N-terminal domain"/>
    <property type="match status" value="1"/>
</dbReference>
<organism>
    <name type="scientific">Azoarcus sp. (strain BH72)</name>
    <dbReference type="NCBI Taxonomy" id="418699"/>
    <lineage>
        <taxon>Bacteria</taxon>
        <taxon>Pseudomonadati</taxon>
        <taxon>Pseudomonadota</taxon>
        <taxon>Betaproteobacteria</taxon>
        <taxon>Rhodocyclales</taxon>
        <taxon>Zoogloeaceae</taxon>
        <taxon>Azoarcus</taxon>
    </lineage>
</organism>
<reference key="1">
    <citation type="journal article" date="2006" name="Nat. Biotechnol.">
        <title>Complete genome of the mutualistic, N2-fixing grass endophyte Azoarcus sp. strain BH72.</title>
        <authorList>
            <person name="Krause A."/>
            <person name="Ramakumar A."/>
            <person name="Bartels D."/>
            <person name="Battistoni F."/>
            <person name="Bekel T."/>
            <person name="Boch J."/>
            <person name="Boehm M."/>
            <person name="Friedrich F."/>
            <person name="Hurek T."/>
            <person name="Krause L."/>
            <person name="Linke B."/>
            <person name="McHardy A.C."/>
            <person name="Sarkar A."/>
            <person name="Schneiker S."/>
            <person name="Syed A.A."/>
            <person name="Thauer R."/>
            <person name="Vorhoelter F.-J."/>
            <person name="Weidner S."/>
            <person name="Puehler A."/>
            <person name="Reinhold-Hurek B."/>
            <person name="Kaiser O."/>
            <person name="Goesmann A."/>
        </authorList>
    </citation>
    <scope>NUCLEOTIDE SEQUENCE [LARGE SCALE GENOMIC DNA]</scope>
    <source>
        <strain>BH72</strain>
    </source>
</reference>
<sequence>MQAGVENLVEQVVSGLGYELVDFELSPKGRLLRVFIDIERGVTVDDCATVSNQLTRVFEVENVDYDRLEVSSPGLDRPLKKLADFERFAGQEIQLRLSLPIGNQRNFVGVLQGVRESSVVLLTEKGELLAPFEEIEKARLVPKF</sequence>
<evidence type="ECO:0000255" key="1">
    <source>
        <dbReference type="HAMAP-Rule" id="MF_01077"/>
    </source>
</evidence>